<name>URK_BORRA</name>
<proteinExistence type="inferred from homology"/>
<sequence>MVKIIGISGGSGSGKTTIVNKISEVISEFVLISQDNYYKSVGDYEYEFLDVNFDHPDAFDNNLFYKQLKKLKENQSINMPLYDFINHKRRDETIKIVPTPIIIVEGIMIFVEERVRNLIDLKIYIDTPNDIRFIRRLERDMSKRGRTLESVIEQYLRTTRAGYYRFIEPTKEYADLIIPEGGHNDKALYVLSSFLKTLVKDSSKFF</sequence>
<keyword id="KW-0067">ATP-binding</keyword>
<keyword id="KW-0963">Cytoplasm</keyword>
<keyword id="KW-0418">Kinase</keyword>
<keyword id="KW-0547">Nucleotide-binding</keyword>
<keyword id="KW-0808">Transferase</keyword>
<reference key="1">
    <citation type="journal article" date="2008" name="PLoS Genet.">
        <title>The genome of Borrelia recurrentis, the agent of deadly louse-borne relapsing fever, is a degraded subset of tick-borne Borrelia duttonii.</title>
        <authorList>
            <person name="Lescot M."/>
            <person name="Audic S."/>
            <person name="Robert C."/>
            <person name="Nguyen T.T."/>
            <person name="Blanc G."/>
            <person name="Cutler S.J."/>
            <person name="Wincker P."/>
            <person name="Couloux A."/>
            <person name="Claverie J.-M."/>
            <person name="Raoult D."/>
            <person name="Drancourt M."/>
        </authorList>
    </citation>
    <scope>NUCLEOTIDE SEQUENCE [LARGE SCALE GENOMIC DNA]</scope>
    <source>
        <strain>A1</strain>
    </source>
</reference>
<accession>B5RQJ8</accession>
<dbReference type="EC" id="2.7.1.48" evidence="1"/>
<dbReference type="EMBL" id="CP000993">
    <property type="protein sequence ID" value="ACH94282.1"/>
    <property type="molecule type" value="Genomic_DNA"/>
</dbReference>
<dbReference type="RefSeq" id="WP_012537791.1">
    <property type="nucleotide sequence ID" value="NZ_CP169983.1"/>
</dbReference>
<dbReference type="SMR" id="B5RQJ8"/>
<dbReference type="KEGG" id="bre:BRE_20"/>
<dbReference type="HOGENOM" id="CLU_021278_1_2_12"/>
<dbReference type="UniPathway" id="UPA00574">
    <property type="reaction ID" value="UER00637"/>
</dbReference>
<dbReference type="UniPathway" id="UPA00579">
    <property type="reaction ID" value="UER00640"/>
</dbReference>
<dbReference type="Proteomes" id="UP000000612">
    <property type="component" value="Chromosome"/>
</dbReference>
<dbReference type="GO" id="GO:0005737">
    <property type="term" value="C:cytoplasm"/>
    <property type="evidence" value="ECO:0007669"/>
    <property type="project" value="UniProtKB-SubCell"/>
</dbReference>
<dbReference type="GO" id="GO:0005524">
    <property type="term" value="F:ATP binding"/>
    <property type="evidence" value="ECO:0007669"/>
    <property type="project" value="UniProtKB-UniRule"/>
</dbReference>
<dbReference type="GO" id="GO:0043771">
    <property type="term" value="F:cytidine kinase activity"/>
    <property type="evidence" value="ECO:0007669"/>
    <property type="project" value="RHEA"/>
</dbReference>
<dbReference type="GO" id="GO:0004849">
    <property type="term" value="F:uridine kinase activity"/>
    <property type="evidence" value="ECO:0007669"/>
    <property type="project" value="UniProtKB-UniRule"/>
</dbReference>
<dbReference type="GO" id="GO:0044211">
    <property type="term" value="P:CTP salvage"/>
    <property type="evidence" value="ECO:0007669"/>
    <property type="project" value="UniProtKB-UniRule"/>
</dbReference>
<dbReference type="GO" id="GO:0044206">
    <property type="term" value="P:UMP salvage"/>
    <property type="evidence" value="ECO:0007669"/>
    <property type="project" value="UniProtKB-UniRule"/>
</dbReference>
<dbReference type="CDD" id="cd02023">
    <property type="entry name" value="UMPK"/>
    <property type="match status" value="1"/>
</dbReference>
<dbReference type="Gene3D" id="3.40.50.300">
    <property type="entry name" value="P-loop containing nucleotide triphosphate hydrolases"/>
    <property type="match status" value="1"/>
</dbReference>
<dbReference type="HAMAP" id="MF_00551">
    <property type="entry name" value="Uridine_kinase"/>
    <property type="match status" value="1"/>
</dbReference>
<dbReference type="InterPro" id="IPR027417">
    <property type="entry name" value="P-loop_NTPase"/>
</dbReference>
<dbReference type="InterPro" id="IPR006083">
    <property type="entry name" value="PRK/URK"/>
</dbReference>
<dbReference type="InterPro" id="IPR026008">
    <property type="entry name" value="Uridine_kinase"/>
</dbReference>
<dbReference type="InterPro" id="IPR000764">
    <property type="entry name" value="Uridine_kinase-like"/>
</dbReference>
<dbReference type="NCBIfam" id="NF004018">
    <property type="entry name" value="PRK05480.1"/>
    <property type="match status" value="1"/>
</dbReference>
<dbReference type="NCBIfam" id="TIGR00235">
    <property type="entry name" value="udk"/>
    <property type="match status" value="1"/>
</dbReference>
<dbReference type="PANTHER" id="PTHR10285">
    <property type="entry name" value="URIDINE KINASE"/>
    <property type="match status" value="1"/>
</dbReference>
<dbReference type="Pfam" id="PF00485">
    <property type="entry name" value="PRK"/>
    <property type="match status" value="1"/>
</dbReference>
<dbReference type="PRINTS" id="PR00988">
    <property type="entry name" value="URIDINKINASE"/>
</dbReference>
<dbReference type="SUPFAM" id="SSF52540">
    <property type="entry name" value="P-loop containing nucleoside triphosphate hydrolases"/>
    <property type="match status" value="1"/>
</dbReference>
<feature type="chain" id="PRO_1000129072" description="Uridine kinase">
    <location>
        <begin position="1"/>
        <end position="206"/>
    </location>
</feature>
<feature type="binding site" evidence="1">
    <location>
        <begin position="9"/>
        <end position="16"/>
    </location>
    <ligand>
        <name>ATP</name>
        <dbReference type="ChEBI" id="CHEBI:30616"/>
    </ligand>
</feature>
<gene>
    <name evidence="1" type="primary">udk</name>
    <name type="ordered locus">BRE_20</name>
</gene>
<evidence type="ECO:0000255" key="1">
    <source>
        <dbReference type="HAMAP-Rule" id="MF_00551"/>
    </source>
</evidence>
<protein>
    <recommendedName>
        <fullName evidence="1">Uridine kinase</fullName>
        <ecNumber evidence="1">2.7.1.48</ecNumber>
    </recommendedName>
    <alternativeName>
        <fullName evidence="1">Cytidine monophosphokinase</fullName>
    </alternativeName>
    <alternativeName>
        <fullName evidence="1">Uridine monophosphokinase</fullName>
    </alternativeName>
</protein>
<comment type="catalytic activity">
    <reaction evidence="1">
        <text>uridine + ATP = UMP + ADP + H(+)</text>
        <dbReference type="Rhea" id="RHEA:16825"/>
        <dbReference type="ChEBI" id="CHEBI:15378"/>
        <dbReference type="ChEBI" id="CHEBI:16704"/>
        <dbReference type="ChEBI" id="CHEBI:30616"/>
        <dbReference type="ChEBI" id="CHEBI:57865"/>
        <dbReference type="ChEBI" id="CHEBI:456216"/>
        <dbReference type="EC" id="2.7.1.48"/>
    </reaction>
</comment>
<comment type="catalytic activity">
    <reaction evidence="1">
        <text>cytidine + ATP = CMP + ADP + H(+)</text>
        <dbReference type="Rhea" id="RHEA:24674"/>
        <dbReference type="ChEBI" id="CHEBI:15378"/>
        <dbReference type="ChEBI" id="CHEBI:17562"/>
        <dbReference type="ChEBI" id="CHEBI:30616"/>
        <dbReference type="ChEBI" id="CHEBI:60377"/>
        <dbReference type="ChEBI" id="CHEBI:456216"/>
        <dbReference type="EC" id="2.7.1.48"/>
    </reaction>
</comment>
<comment type="pathway">
    <text evidence="1">Pyrimidine metabolism; CTP biosynthesis via salvage pathway; CTP from cytidine: step 1/3.</text>
</comment>
<comment type="pathway">
    <text evidence="1">Pyrimidine metabolism; UMP biosynthesis via salvage pathway; UMP from uridine: step 1/1.</text>
</comment>
<comment type="subcellular location">
    <subcellularLocation>
        <location evidence="1">Cytoplasm</location>
    </subcellularLocation>
</comment>
<comment type="similarity">
    <text evidence="1">Belongs to the uridine kinase family.</text>
</comment>
<organism>
    <name type="scientific">Borrelia recurrentis (strain A1)</name>
    <dbReference type="NCBI Taxonomy" id="412418"/>
    <lineage>
        <taxon>Bacteria</taxon>
        <taxon>Pseudomonadati</taxon>
        <taxon>Spirochaetota</taxon>
        <taxon>Spirochaetia</taxon>
        <taxon>Spirochaetales</taxon>
        <taxon>Borreliaceae</taxon>
        <taxon>Borrelia</taxon>
    </lineage>
</organism>